<organism>
    <name type="scientific">Treponema pallidum (strain Nichols)</name>
    <dbReference type="NCBI Taxonomy" id="243276"/>
    <lineage>
        <taxon>Bacteria</taxon>
        <taxon>Pseudomonadati</taxon>
        <taxon>Spirochaetota</taxon>
        <taxon>Spirochaetia</taxon>
        <taxon>Spirochaetales</taxon>
        <taxon>Treponemataceae</taxon>
        <taxon>Treponema</taxon>
    </lineage>
</organism>
<feature type="chain" id="PRO_0000134267" description="Small ribosomal subunit protein uS2">
    <location>
        <begin position="1"/>
        <end position="291"/>
    </location>
</feature>
<feature type="region of interest" description="Disordered" evidence="1">
    <location>
        <begin position="238"/>
        <end position="291"/>
    </location>
</feature>
<feature type="compositionally biased region" description="Acidic residues" evidence="1">
    <location>
        <begin position="238"/>
        <end position="247"/>
    </location>
</feature>
<feature type="compositionally biased region" description="Basic and acidic residues" evidence="1">
    <location>
        <begin position="249"/>
        <end position="259"/>
    </location>
</feature>
<feature type="compositionally biased region" description="Acidic residues" evidence="1">
    <location>
        <begin position="274"/>
        <end position="291"/>
    </location>
</feature>
<sequence>MAVVTIKNLLESGVHFGHQVRRWDPRMKKYIFAERNGIHIIDLQKTITAIREAYDMVRRTVSSGKSVLFVGTKKQSQQTIAKEAQRCGMFYVTNRWLGGMLTNFSTIRKSLSRLKKIERMEIDGTFEHLSKKEVASLRKEHAKLEKNLGGIKEMKELPGVVFIIDTRKETIAIREARRVGIPIVAVVDTNCNPEGIDYPIPGNDDAIRAISLFTQLIANAVMEAGNEHGLKIIENLQDEESGDELDESVSLHEEGREITDYENYTPPEEREYSVNDEGDVFDEDESLYEGR</sequence>
<protein>
    <recommendedName>
        <fullName evidence="2">Small ribosomal subunit protein uS2</fullName>
    </recommendedName>
    <alternativeName>
        <fullName>30S ribosomal protein S2</fullName>
    </alternativeName>
</protein>
<proteinExistence type="inferred from homology"/>
<name>RS2_TREPA</name>
<reference key="1">
    <citation type="journal article" date="1998" name="Science">
        <title>Complete genome sequence of Treponema pallidum, the syphilis spirochete.</title>
        <authorList>
            <person name="Fraser C.M."/>
            <person name="Norris S.J."/>
            <person name="Weinstock G.M."/>
            <person name="White O."/>
            <person name="Sutton G.G."/>
            <person name="Dodson R.J."/>
            <person name="Gwinn M.L."/>
            <person name="Hickey E.K."/>
            <person name="Clayton R.A."/>
            <person name="Ketchum K.A."/>
            <person name="Sodergren E."/>
            <person name="Hardham J.M."/>
            <person name="McLeod M.P."/>
            <person name="Salzberg S.L."/>
            <person name="Peterson J.D."/>
            <person name="Khalak H.G."/>
            <person name="Richardson D.L."/>
            <person name="Howell J.K."/>
            <person name="Chidambaram M."/>
            <person name="Utterback T.R."/>
            <person name="McDonald L.A."/>
            <person name="Artiach P."/>
            <person name="Bowman C."/>
            <person name="Cotton M.D."/>
            <person name="Fujii C."/>
            <person name="Garland S.A."/>
            <person name="Hatch B."/>
            <person name="Horst K."/>
            <person name="Roberts K.M."/>
            <person name="Sandusky M."/>
            <person name="Weidman J.F."/>
            <person name="Smith H.O."/>
            <person name="Venter J.C."/>
        </authorList>
    </citation>
    <scope>NUCLEOTIDE SEQUENCE [LARGE SCALE GENOMIC DNA]</scope>
    <source>
        <strain>Nichols</strain>
    </source>
</reference>
<keyword id="KW-1185">Reference proteome</keyword>
<keyword id="KW-0687">Ribonucleoprotein</keyword>
<keyword id="KW-0689">Ribosomal protein</keyword>
<accession>O83615</accession>
<gene>
    <name type="primary">rpsB</name>
    <name type="ordered locus">TP_0606</name>
</gene>
<comment type="similarity">
    <text evidence="2">Belongs to the universal ribosomal protein uS2 family.</text>
</comment>
<dbReference type="EMBL" id="AE000520">
    <property type="protein sequence ID" value="AAC65579.1"/>
    <property type="molecule type" value="Genomic_DNA"/>
</dbReference>
<dbReference type="PIR" id="H71304">
    <property type="entry name" value="H71304"/>
</dbReference>
<dbReference type="RefSeq" id="WP_010882052.1">
    <property type="nucleotide sequence ID" value="NC_021490.2"/>
</dbReference>
<dbReference type="SMR" id="O83615"/>
<dbReference type="STRING" id="243276.TP_0606"/>
<dbReference type="EnsemblBacteria" id="AAC65579">
    <property type="protein sequence ID" value="AAC65579"/>
    <property type="gene ID" value="TP_0606"/>
</dbReference>
<dbReference type="GeneID" id="93876373"/>
<dbReference type="KEGG" id="tpa:TP_0606"/>
<dbReference type="KEGG" id="tpw:TPANIC_0606"/>
<dbReference type="eggNOG" id="COG0052">
    <property type="taxonomic scope" value="Bacteria"/>
</dbReference>
<dbReference type="HOGENOM" id="CLU_040318_1_3_12"/>
<dbReference type="OrthoDB" id="9808036at2"/>
<dbReference type="Proteomes" id="UP000000811">
    <property type="component" value="Chromosome"/>
</dbReference>
<dbReference type="GO" id="GO:0022627">
    <property type="term" value="C:cytosolic small ribosomal subunit"/>
    <property type="evidence" value="ECO:0007669"/>
    <property type="project" value="TreeGrafter"/>
</dbReference>
<dbReference type="GO" id="GO:0003735">
    <property type="term" value="F:structural constituent of ribosome"/>
    <property type="evidence" value="ECO:0007669"/>
    <property type="project" value="InterPro"/>
</dbReference>
<dbReference type="GO" id="GO:0006412">
    <property type="term" value="P:translation"/>
    <property type="evidence" value="ECO:0007669"/>
    <property type="project" value="UniProtKB-UniRule"/>
</dbReference>
<dbReference type="CDD" id="cd01425">
    <property type="entry name" value="RPS2"/>
    <property type="match status" value="1"/>
</dbReference>
<dbReference type="FunFam" id="1.10.287.610:FF:000001">
    <property type="entry name" value="30S ribosomal protein S2"/>
    <property type="match status" value="1"/>
</dbReference>
<dbReference type="Gene3D" id="3.40.50.10490">
    <property type="entry name" value="Glucose-6-phosphate isomerase like protein, domain 1"/>
    <property type="match status" value="1"/>
</dbReference>
<dbReference type="Gene3D" id="1.10.287.610">
    <property type="entry name" value="Helix hairpin bin"/>
    <property type="match status" value="1"/>
</dbReference>
<dbReference type="HAMAP" id="MF_00291_B">
    <property type="entry name" value="Ribosomal_uS2_B"/>
    <property type="match status" value="1"/>
</dbReference>
<dbReference type="InterPro" id="IPR001865">
    <property type="entry name" value="Ribosomal_uS2"/>
</dbReference>
<dbReference type="InterPro" id="IPR005706">
    <property type="entry name" value="Ribosomal_uS2_bac/mit/plastid"/>
</dbReference>
<dbReference type="InterPro" id="IPR018130">
    <property type="entry name" value="Ribosomal_uS2_CS"/>
</dbReference>
<dbReference type="InterPro" id="IPR023591">
    <property type="entry name" value="Ribosomal_uS2_flav_dom_sf"/>
</dbReference>
<dbReference type="NCBIfam" id="TIGR01011">
    <property type="entry name" value="rpsB_bact"/>
    <property type="match status" value="1"/>
</dbReference>
<dbReference type="PANTHER" id="PTHR12534">
    <property type="entry name" value="30S RIBOSOMAL PROTEIN S2 PROKARYOTIC AND ORGANELLAR"/>
    <property type="match status" value="1"/>
</dbReference>
<dbReference type="PANTHER" id="PTHR12534:SF0">
    <property type="entry name" value="SMALL RIBOSOMAL SUBUNIT PROTEIN US2M"/>
    <property type="match status" value="1"/>
</dbReference>
<dbReference type="Pfam" id="PF00318">
    <property type="entry name" value="Ribosomal_S2"/>
    <property type="match status" value="1"/>
</dbReference>
<dbReference type="PRINTS" id="PR00395">
    <property type="entry name" value="RIBOSOMALS2"/>
</dbReference>
<dbReference type="SUPFAM" id="SSF52313">
    <property type="entry name" value="Ribosomal protein S2"/>
    <property type="match status" value="1"/>
</dbReference>
<dbReference type="PROSITE" id="PS00962">
    <property type="entry name" value="RIBOSOMAL_S2_1"/>
    <property type="match status" value="1"/>
</dbReference>
<dbReference type="PROSITE" id="PS00963">
    <property type="entry name" value="RIBOSOMAL_S2_2"/>
    <property type="match status" value="1"/>
</dbReference>
<evidence type="ECO:0000256" key="1">
    <source>
        <dbReference type="SAM" id="MobiDB-lite"/>
    </source>
</evidence>
<evidence type="ECO:0000305" key="2"/>